<organism>
    <name type="scientific">Synechococcus sp. (strain JA-3-3Ab)</name>
    <name type="common">Cyanobacteria bacterium Yellowstone A-Prime</name>
    <dbReference type="NCBI Taxonomy" id="321327"/>
    <lineage>
        <taxon>Bacteria</taxon>
        <taxon>Bacillati</taxon>
        <taxon>Cyanobacteriota</taxon>
        <taxon>Cyanophyceae</taxon>
        <taxon>Synechococcales</taxon>
        <taxon>Synechococcaceae</taxon>
        <taxon>Synechococcus</taxon>
    </lineage>
</organism>
<gene>
    <name evidence="1" type="primary">rpsS</name>
    <name evidence="1" type="synonym">rps19</name>
    <name type="ordered locus">CYA_1174</name>
</gene>
<protein>
    <recommendedName>
        <fullName evidence="1">Small ribosomal subunit protein uS19</fullName>
    </recommendedName>
    <alternativeName>
        <fullName evidence="2">30S ribosomal protein S19</fullName>
    </alternativeName>
</protein>
<name>RS19_SYNJA</name>
<feature type="chain" id="PRO_0000265453" description="Small ribosomal subunit protein uS19">
    <location>
        <begin position="1"/>
        <end position="93"/>
    </location>
</feature>
<keyword id="KW-0687">Ribonucleoprotein</keyword>
<keyword id="KW-0689">Ribosomal protein</keyword>
<keyword id="KW-0694">RNA-binding</keyword>
<keyword id="KW-0699">rRNA-binding</keyword>
<reference key="1">
    <citation type="journal article" date="2007" name="ISME J.">
        <title>Population level functional diversity in a microbial community revealed by comparative genomic and metagenomic analyses.</title>
        <authorList>
            <person name="Bhaya D."/>
            <person name="Grossman A.R."/>
            <person name="Steunou A.-S."/>
            <person name="Khuri N."/>
            <person name="Cohan F.M."/>
            <person name="Hamamura N."/>
            <person name="Melendrez M.C."/>
            <person name="Bateson M.M."/>
            <person name="Ward D.M."/>
            <person name="Heidelberg J.F."/>
        </authorList>
    </citation>
    <scope>NUCLEOTIDE SEQUENCE [LARGE SCALE GENOMIC DNA]</scope>
    <source>
        <strain>JA-3-3Ab</strain>
    </source>
</reference>
<sequence>MGRSLKKGPFVDAKLLLKIEKMNERNEKHMIKTWSRASTILPVMIGHTIAVHNGKQHVPIYITDQMVGHKLGEFVPTRTFRGHAGSDKKAARR</sequence>
<proteinExistence type="inferred from homology"/>
<dbReference type="EMBL" id="CP000239">
    <property type="protein sequence ID" value="ABC99362.1"/>
    <property type="molecule type" value="Genomic_DNA"/>
</dbReference>
<dbReference type="RefSeq" id="WP_011430043.1">
    <property type="nucleotide sequence ID" value="NC_007775.1"/>
</dbReference>
<dbReference type="SMR" id="Q2JV85"/>
<dbReference type="STRING" id="321327.CYA_1174"/>
<dbReference type="KEGG" id="cya:CYA_1174"/>
<dbReference type="eggNOG" id="COG0185">
    <property type="taxonomic scope" value="Bacteria"/>
</dbReference>
<dbReference type="HOGENOM" id="CLU_144911_0_1_3"/>
<dbReference type="OrthoDB" id="9797833at2"/>
<dbReference type="Proteomes" id="UP000008818">
    <property type="component" value="Chromosome"/>
</dbReference>
<dbReference type="GO" id="GO:0005737">
    <property type="term" value="C:cytoplasm"/>
    <property type="evidence" value="ECO:0007669"/>
    <property type="project" value="UniProtKB-ARBA"/>
</dbReference>
<dbReference type="GO" id="GO:0015935">
    <property type="term" value="C:small ribosomal subunit"/>
    <property type="evidence" value="ECO:0007669"/>
    <property type="project" value="InterPro"/>
</dbReference>
<dbReference type="GO" id="GO:0019843">
    <property type="term" value="F:rRNA binding"/>
    <property type="evidence" value="ECO:0007669"/>
    <property type="project" value="UniProtKB-UniRule"/>
</dbReference>
<dbReference type="GO" id="GO:0003735">
    <property type="term" value="F:structural constituent of ribosome"/>
    <property type="evidence" value="ECO:0007669"/>
    <property type="project" value="InterPro"/>
</dbReference>
<dbReference type="GO" id="GO:0000028">
    <property type="term" value="P:ribosomal small subunit assembly"/>
    <property type="evidence" value="ECO:0007669"/>
    <property type="project" value="TreeGrafter"/>
</dbReference>
<dbReference type="GO" id="GO:0006412">
    <property type="term" value="P:translation"/>
    <property type="evidence" value="ECO:0007669"/>
    <property type="project" value="UniProtKB-UniRule"/>
</dbReference>
<dbReference type="FunFam" id="3.30.860.10:FF:000001">
    <property type="entry name" value="30S ribosomal protein S19"/>
    <property type="match status" value="1"/>
</dbReference>
<dbReference type="Gene3D" id="3.30.860.10">
    <property type="entry name" value="30s Ribosomal Protein S19, Chain A"/>
    <property type="match status" value="1"/>
</dbReference>
<dbReference type="HAMAP" id="MF_00531">
    <property type="entry name" value="Ribosomal_uS19"/>
    <property type="match status" value="1"/>
</dbReference>
<dbReference type="InterPro" id="IPR002222">
    <property type="entry name" value="Ribosomal_uS19"/>
</dbReference>
<dbReference type="InterPro" id="IPR005732">
    <property type="entry name" value="Ribosomal_uS19_bac-type"/>
</dbReference>
<dbReference type="InterPro" id="IPR020934">
    <property type="entry name" value="Ribosomal_uS19_CS"/>
</dbReference>
<dbReference type="InterPro" id="IPR023575">
    <property type="entry name" value="Ribosomal_uS19_SF"/>
</dbReference>
<dbReference type="NCBIfam" id="TIGR01050">
    <property type="entry name" value="rpsS_bact"/>
    <property type="match status" value="1"/>
</dbReference>
<dbReference type="PANTHER" id="PTHR11880">
    <property type="entry name" value="RIBOSOMAL PROTEIN S19P FAMILY MEMBER"/>
    <property type="match status" value="1"/>
</dbReference>
<dbReference type="PANTHER" id="PTHR11880:SF8">
    <property type="entry name" value="SMALL RIBOSOMAL SUBUNIT PROTEIN US19M"/>
    <property type="match status" value="1"/>
</dbReference>
<dbReference type="Pfam" id="PF00203">
    <property type="entry name" value="Ribosomal_S19"/>
    <property type="match status" value="1"/>
</dbReference>
<dbReference type="PIRSF" id="PIRSF002144">
    <property type="entry name" value="Ribosomal_S19"/>
    <property type="match status" value="1"/>
</dbReference>
<dbReference type="PRINTS" id="PR00975">
    <property type="entry name" value="RIBOSOMALS19"/>
</dbReference>
<dbReference type="SUPFAM" id="SSF54570">
    <property type="entry name" value="Ribosomal protein S19"/>
    <property type="match status" value="1"/>
</dbReference>
<dbReference type="PROSITE" id="PS00323">
    <property type="entry name" value="RIBOSOMAL_S19"/>
    <property type="match status" value="1"/>
</dbReference>
<comment type="function">
    <text evidence="1">Protein S19 forms a complex with S13 that binds strongly to the 16S ribosomal RNA.</text>
</comment>
<comment type="similarity">
    <text evidence="1">Belongs to the universal ribosomal protein uS19 family.</text>
</comment>
<accession>Q2JV85</accession>
<evidence type="ECO:0000255" key="1">
    <source>
        <dbReference type="HAMAP-Rule" id="MF_00531"/>
    </source>
</evidence>
<evidence type="ECO:0000305" key="2"/>